<accession>Q54QT8</accession>
<accession>Q966R1</accession>
<protein>
    <recommendedName>
        <fullName>Calcium-binding protein G</fullName>
    </recommendedName>
    <alternativeName>
        <fullName>Calcium-binding protein 7</fullName>
    </alternativeName>
</protein>
<evidence type="ECO:0000255" key="1">
    <source>
        <dbReference type="PROSITE-ProRule" id="PRU00448"/>
    </source>
</evidence>
<evidence type="ECO:0000269" key="2">
    <source>
    </source>
</evidence>
<gene>
    <name type="primary">cbpG</name>
    <name type="synonym">cpb7</name>
    <name type="ORF">DDB_G0283609</name>
</gene>
<organism>
    <name type="scientific">Dictyostelium discoideum</name>
    <name type="common">Social amoeba</name>
    <dbReference type="NCBI Taxonomy" id="44689"/>
    <lineage>
        <taxon>Eukaryota</taxon>
        <taxon>Amoebozoa</taxon>
        <taxon>Evosea</taxon>
        <taxon>Eumycetozoa</taxon>
        <taxon>Dictyostelia</taxon>
        <taxon>Dictyosteliales</taxon>
        <taxon>Dictyosteliaceae</taxon>
        <taxon>Dictyostelium</taxon>
    </lineage>
</organism>
<keyword id="KW-0106">Calcium</keyword>
<keyword id="KW-0479">Metal-binding</keyword>
<keyword id="KW-1185">Reference proteome</keyword>
<keyword id="KW-0677">Repeat</keyword>
<dbReference type="EMBL" id="AB070449">
    <property type="protein sequence ID" value="BAB63907.1"/>
    <property type="molecule type" value="mRNA"/>
</dbReference>
<dbReference type="EMBL" id="AAFI02000056">
    <property type="protein sequence ID" value="EAL65571.1"/>
    <property type="molecule type" value="Genomic_DNA"/>
</dbReference>
<dbReference type="RefSeq" id="XP_638935.1">
    <property type="nucleotide sequence ID" value="XM_633843.1"/>
</dbReference>
<dbReference type="SMR" id="Q54QT8"/>
<dbReference type="FunCoup" id="Q54QT8">
    <property type="interactions" value="4"/>
</dbReference>
<dbReference type="STRING" id="44689.Q54QT8"/>
<dbReference type="PaxDb" id="44689-DDB0191382"/>
<dbReference type="EnsemblProtists" id="EAL65571">
    <property type="protein sequence ID" value="EAL65571"/>
    <property type="gene ID" value="DDB_G0283609"/>
</dbReference>
<dbReference type="GeneID" id="8624174"/>
<dbReference type="KEGG" id="ddi:DDB_G0283609"/>
<dbReference type="dictyBase" id="DDB_G0283609">
    <property type="gene designation" value="cbpG"/>
</dbReference>
<dbReference type="VEuPathDB" id="AmoebaDB:DDB_G0283609"/>
<dbReference type="HOGENOM" id="CLU_1605758_0_0_1"/>
<dbReference type="InParanoid" id="Q54QT8"/>
<dbReference type="PhylomeDB" id="Q54QT8"/>
<dbReference type="PRO" id="PR:Q54QT8"/>
<dbReference type="Proteomes" id="UP000002195">
    <property type="component" value="Chromosome 4"/>
</dbReference>
<dbReference type="GO" id="GO:0005829">
    <property type="term" value="C:cytosol"/>
    <property type="evidence" value="ECO:0000304"/>
    <property type="project" value="dictyBase"/>
</dbReference>
<dbReference type="GO" id="GO:0031012">
    <property type="term" value="C:extracellular matrix"/>
    <property type="evidence" value="ECO:0007005"/>
    <property type="project" value="dictyBase"/>
</dbReference>
<dbReference type="GO" id="GO:0005509">
    <property type="term" value="F:calcium ion binding"/>
    <property type="evidence" value="ECO:0000314"/>
    <property type="project" value="dictyBase"/>
</dbReference>
<dbReference type="FunFam" id="1.10.238.10:FF:000930">
    <property type="entry name" value="Calcium-binding protein G"/>
    <property type="match status" value="1"/>
</dbReference>
<dbReference type="Gene3D" id="1.10.238.10">
    <property type="entry name" value="EF-hand"/>
    <property type="match status" value="2"/>
</dbReference>
<dbReference type="InterPro" id="IPR011992">
    <property type="entry name" value="EF-hand-dom_pair"/>
</dbReference>
<dbReference type="InterPro" id="IPR018247">
    <property type="entry name" value="EF_Hand_1_Ca_BS"/>
</dbReference>
<dbReference type="InterPro" id="IPR002048">
    <property type="entry name" value="EF_hand_dom"/>
</dbReference>
<dbReference type="PANTHER" id="PTHR10827:SF85">
    <property type="entry name" value="CALCIUM-BINDING PROTEIN"/>
    <property type="match status" value="1"/>
</dbReference>
<dbReference type="PANTHER" id="PTHR10827">
    <property type="entry name" value="RETICULOCALBIN"/>
    <property type="match status" value="1"/>
</dbReference>
<dbReference type="Pfam" id="PF13499">
    <property type="entry name" value="EF-hand_7"/>
    <property type="match status" value="1"/>
</dbReference>
<dbReference type="SMART" id="SM00054">
    <property type="entry name" value="EFh"/>
    <property type="match status" value="4"/>
</dbReference>
<dbReference type="SUPFAM" id="SSF47473">
    <property type="entry name" value="EF-hand"/>
    <property type="match status" value="1"/>
</dbReference>
<dbReference type="PROSITE" id="PS00018">
    <property type="entry name" value="EF_HAND_1"/>
    <property type="match status" value="2"/>
</dbReference>
<dbReference type="PROSITE" id="PS50222">
    <property type="entry name" value="EF_HAND_2"/>
    <property type="match status" value="4"/>
</dbReference>
<comment type="developmental stage">
    <text evidence="2">Expressed prior to the late culmination stage, in the prespore region.</text>
</comment>
<reference key="1">
    <citation type="journal article" date="2003" name="Dev. Growth Differ.">
        <title>Identification and characterization of novel calcium-binding proteins of Dictyostelium and their spatial expression patterns during development.</title>
        <authorList>
            <person name="Sakamoto H."/>
            <person name="Nishio K."/>
            <person name="Tomisako M."/>
            <person name="Kuwayama H."/>
            <person name="Tanaka Y."/>
            <person name="Suetake I."/>
            <person name="Tajima S."/>
            <person name="Ogihara S."/>
            <person name="Coukell B."/>
            <person name="Maeda M."/>
        </authorList>
    </citation>
    <scope>NUCLEOTIDE SEQUENCE [MRNA]</scope>
    <scope>CALCIUM-BINDING</scope>
    <scope>DEVELOPMENTAL STAGE</scope>
    <source>
        <strain>AX4</strain>
    </source>
</reference>
<reference key="2">
    <citation type="journal article" date="2005" name="Nature">
        <title>The genome of the social amoeba Dictyostelium discoideum.</title>
        <authorList>
            <person name="Eichinger L."/>
            <person name="Pachebat J.A."/>
            <person name="Gloeckner G."/>
            <person name="Rajandream M.A."/>
            <person name="Sucgang R."/>
            <person name="Berriman M."/>
            <person name="Song J."/>
            <person name="Olsen R."/>
            <person name="Szafranski K."/>
            <person name="Xu Q."/>
            <person name="Tunggal B."/>
            <person name="Kummerfeld S."/>
            <person name="Madera M."/>
            <person name="Konfortov B.A."/>
            <person name="Rivero F."/>
            <person name="Bankier A.T."/>
            <person name="Lehmann R."/>
            <person name="Hamlin N."/>
            <person name="Davies R."/>
            <person name="Gaudet P."/>
            <person name="Fey P."/>
            <person name="Pilcher K."/>
            <person name="Chen G."/>
            <person name="Saunders D."/>
            <person name="Sodergren E.J."/>
            <person name="Davis P."/>
            <person name="Kerhornou A."/>
            <person name="Nie X."/>
            <person name="Hall N."/>
            <person name="Anjard C."/>
            <person name="Hemphill L."/>
            <person name="Bason N."/>
            <person name="Farbrother P."/>
            <person name="Desany B."/>
            <person name="Just E."/>
            <person name="Morio T."/>
            <person name="Rost R."/>
            <person name="Churcher C.M."/>
            <person name="Cooper J."/>
            <person name="Haydock S."/>
            <person name="van Driessche N."/>
            <person name="Cronin A."/>
            <person name="Goodhead I."/>
            <person name="Muzny D.M."/>
            <person name="Mourier T."/>
            <person name="Pain A."/>
            <person name="Lu M."/>
            <person name="Harper D."/>
            <person name="Lindsay R."/>
            <person name="Hauser H."/>
            <person name="James K.D."/>
            <person name="Quiles M."/>
            <person name="Madan Babu M."/>
            <person name="Saito T."/>
            <person name="Buchrieser C."/>
            <person name="Wardroper A."/>
            <person name="Felder M."/>
            <person name="Thangavelu M."/>
            <person name="Johnson D."/>
            <person name="Knights A."/>
            <person name="Loulseged H."/>
            <person name="Mungall K.L."/>
            <person name="Oliver K."/>
            <person name="Price C."/>
            <person name="Quail M.A."/>
            <person name="Urushihara H."/>
            <person name="Hernandez J."/>
            <person name="Rabbinowitsch E."/>
            <person name="Steffen D."/>
            <person name="Sanders M."/>
            <person name="Ma J."/>
            <person name="Kohara Y."/>
            <person name="Sharp S."/>
            <person name="Simmonds M.N."/>
            <person name="Spiegler S."/>
            <person name="Tivey A."/>
            <person name="Sugano S."/>
            <person name="White B."/>
            <person name="Walker D."/>
            <person name="Woodward J.R."/>
            <person name="Winckler T."/>
            <person name="Tanaka Y."/>
            <person name="Shaulsky G."/>
            <person name="Schleicher M."/>
            <person name="Weinstock G.M."/>
            <person name="Rosenthal A."/>
            <person name="Cox E.C."/>
            <person name="Chisholm R.L."/>
            <person name="Gibbs R.A."/>
            <person name="Loomis W.F."/>
            <person name="Platzer M."/>
            <person name="Kay R.R."/>
            <person name="Williams J.G."/>
            <person name="Dear P.H."/>
            <person name="Noegel A.A."/>
            <person name="Barrell B.G."/>
            <person name="Kuspa A."/>
        </authorList>
    </citation>
    <scope>NUCLEOTIDE SEQUENCE [LARGE SCALE GENOMIC DNA]</scope>
    <source>
        <strain>AX4</strain>
    </source>
</reference>
<feature type="chain" id="PRO_0000312586" description="Calcium-binding protein G">
    <location>
        <begin position="1"/>
        <end position="169"/>
    </location>
</feature>
<feature type="domain" description="EF-hand 1" evidence="1">
    <location>
        <begin position="9"/>
        <end position="44"/>
    </location>
</feature>
<feature type="domain" description="EF-hand 2" evidence="1">
    <location>
        <begin position="60"/>
        <end position="83"/>
    </location>
</feature>
<feature type="domain" description="EF-hand 3" evidence="1">
    <location>
        <begin position="92"/>
        <end position="127"/>
    </location>
</feature>
<feature type="domain" description="EF-hand 4" evidence="1">
    <location>
        <begin position="133"/>
        <end position="162"/>
    </location>
</feature>
<feature type="binding site" evidence="1">
    <location>
        <position position="105"/>
    </location>
    <ligand>
        <name>Ca(2+)</name>
        <dbReference type="ChEBI" id="CHEBI:29108"/>
        <label>1</label>
    </ligand>
</feature>
<feature type="binding site" evidence="1">
    <location>
        <position position="107"/>
    </location>
    <ligand>
        <name>Ca(2+)</name>
        <dbReference type="ChEBI" id="CHEBI:29108"/>
        <label>1</label>
    </ligand>
</feature>
<feature type="binding site" evidence="1">
    <location>
        <position position="109"/>
    </location>
    <ligand>
        <name>Ca(2+)</name>
        <dbReference type="ChEBI" id="CHEBI:29108"/>
        <label>1</label>
    </ligand>
</feature>
<feature type="binding site" evidence="1">
    <location>
        <position position="111"/>
    </location>
    <ligand>
        <name>Ca(2+)</name>
        <dbReference type="ChEBI" id="CHEBI:29108"/>
        <label>1</label>
    </ligand>
</feature>
<feature type="binding site" evidence="1">
    <location>
        <position position="116"/>
    </location>
    <ligand>
        <name>Ca(2+)</name>
        <dbReference type="ChEBI" id="CHEBI:29108"/>
        <label>1</label>
    </ligand>
</feature>
<feature type="binding site" evidence="1">
    <location>
        <position position="140"/>
    </location>
    <ligand>
        <name>Ca(2+)</name>
        <dbReference type="ChEBI" id="CHEBI:29108"/>
        <label>2</label>
    </ligand>
</feature>
<feature type="binding site" evidence="1">
    <location>
        <position position="142"/>
    </location>
    <ligand>
        <name>Ca(2+)</name>
        <dbReference type="ChEBI" id="CHEBI:29108"/>
        <label>2</label>
    </ligand>
</feature>
<feature type="binding site" evidence="1">
    <location>
        <position position="144"/>
    </location>
    <ligand>
        <name>Ca(2+)</name>
        <dbReference type="ChEBI" id="CHEBI:29108"/>
        <label>2</label>
    </ligand>
</feature>
<feature type="binding site" evidence="1">
    <location>
        <position position="146"/>
    </location>
    <ligand>
        <name>Ca(2+)</name>
        <dbReference type="ChEBI" id="CHEBI:29108"/>
        <label>2</label>
    </ligand>
</feature>
<feature type="binding site" evidence="1">
    <location>
        <position position="151"/>
    </location>
    <ligand>
        <name>Ca(2+)</name>
        <dbReference type="ChEBI" id="CHEBI:29108"/>
        <label>2</label>
    </ligand>
</feature>
<sequence>MSTCGDNSKIFQDIQNFIQDYDLNKDYSVTSSEIYQSFLKKMNGDSLKASQAAGVLCSTVDMDNDGKFSYYEISKYCADQAKKQIEQNAETAALADVEALLLRLDKDKDKKLNKTEFVKFFKEQGYNPYSDPDYVLKIIDLDKDGYVSASELQEWFKQKRLAYARGPIC</sequence>
<proteinExistence type="evidence at protein level"/>
<name>CBPG_DICDI</name>